<accession>Q9BBN0</accession>
<gene>
    <name evidence="1" type="primary">rpoA</name>
</gene>
<protein>
    <recommendedName>
        <fullName evidence="1">DNA-directed RNA polymerase subunit alpha</fullName>
        <shortName evidence="1">PEP</shortName>
        <ecNumber evidence="1">2.7.7.6</ecNumber>
    </recommendedName>
    <alternativeName>
        <fullName evidence="1">Plastid-encoded RNA polymerase subunit alpha</fullName>
        <shortName evidence="1">RNA polymerase subunit alpha</shortName>
    </alternativeName>
</protein>
<comment type="function">
    <text evidence="1">DNA-dependent RNA polymerase catalyzes the transcription of DNA into RNA using the four ribonucleoside triphosphates as substrates.</text>
</comment>
<comment type="catalytic activity">
    <reaction evidence="1">
        <text>RNA(n) + a ribonucleoside 5'-triphosphate = RNA(n+1) + diphosphate</text>
        <dbReference type="Rhea" id="RHEA:21248"/>
        <dbReference type="Rhea" id="RHEA-COMP:14527"/>
        <dbReference type="Rhea" id="RHEA-COMP:17342"/>
        <dbReference type="ChEBI" id="CHEBI:33019"/>
        <dbReference type="ChEBI" id="CHEBI:61557"/>
        <dbReference type="ChEBI" id="CHEBI:140395"/>
        <dbReference type="EC" id="2.7.7.6"/>
    </reaction>
</comment>
<comment type="subunit">
    <text evidence="1">In plastids the minimal PEP RNA polymerase catalytic core is composed of four subunits: alpha, beta, beta', and beta''. When a (nuclear-encoded) sigma factor is associated with the core the holoenzyme is formed, which can initiate transcription.</text>
</comment>
<comment type="subcellular location">
    <subcellularLocation>
        <location>Plastid</location>
        <location>Chloroplast</location>
    </subcellularLocation>
</comment>
<comment type="domain">
    <text evidence="1">The N-terminal domain is essential for RNAP assembly and basal transcription, whereas the C-terminal domain is involved in interaction with transcriptional regulators and with upstream promoter elements.</text>
</comment>
<comment type="similarity">
    <text evidence="1">Belongs to the RNA polymerase alpha chain family.</text>
</comment>
<comment type="sequence caution" evidence="2">
    <conflict type="erroneous initiation">
        <sequence resource="EMBL-CDS" id="AAK01152"/>
    </conflict>
</comment>
<dbReference type="EC" id="2.7.7.6" evidence="1"/>
<dbReference type="EMBL" id="AF311314">
    <property type="protein sequence ID" value="AAK01152.2"/>
    <property type="status" value="ALT_INIT"/>
    <property type="molecule type" value="mRNA"/>
</dbReference>
<dbReference type="SMR" id="Q9BBN0"/>
<dbReference type="GO" id="GO:0009507">
    <property type="term" value="C:chloroplast"/>
    <property type="evidence" value="ECO:0007669"/>
    <property type="project" value="UniProtKB-SubCell"/>
</dbReference>
<dbReference type="GO" id="GO:0000428">
    <property type="term" value="C:DNA-directed RNA polymerase complex"/>
    <property type="evidence" value="ECO:0007669"/>
    <property type="project" value="UniProtKB-KW"/>
</dbReference>
<dbReference type="GO" id="GO:0005739">
    <property type="term" value="C:mitochondrion"/>
    <property type="evidence" value="ECO:0007669"/>
    <property type="project" value="GOC"/>
</dbReference>
<dbReference type="GO" id="GO:0003677">
    <property type="term" value="F:DNA binding"/>
    <property type="evidence" value="ECO:0007669"/>
    <property type="project" value="UniProtKB-UniRule"/>
</dbReference>
<dbReference type="GO" id="GO:0003899">
    <property type="term" value="F:DNA-directed RNA polymerase activity"/>
    <property type="evidence" value="ECO:0007669"/>
    <property type="project" value="UniProtKB-UniRule"/>
</dbReference>
<dbReference type="GO" id="GO:0046983">
    <property type="term" value="F:protein dimerization activity"/>
    <property type="evidence" value="ECO:0007669"/>
    <property type="project" value="InterPro"/>
</dbReference>
<dbReference type="GO" id="GO:0006351">
    <property type="term" value="P:DNA-templated transcription"/>
    <property type="evidence" value="ECO:0007669"/>
    <property type="project" value="UniProtKB-UniRule"/>
</dbReference>
<dbReference type="CDD" id="cd06928">
    <property type="entry name" value="RNAP_alpha_NTD"/>
    <property type="match status" value="1"/>
</dbReference>
<dbReference type="FunFam" id="2.170.120.12:FF:000001">
    <property type="entry name" value="DNA-directed RNA polymerase subunit alpha"/>
    <property type="match status" value="1"/>
</dbReference>
<dbReference type="Gene3D" id="1.10.150.20">
    <property type="entry name" value="5' to 3' exonuclease, C-terminal subdomain"/>
    <property type="match status" value="1"/>
</dbReference>
<dbReference type="Gene3D" id="2.170.120.12">
    <property type="entry name" value="DNA-directed RNA polymerase, insert domain"/>
    <property type="match status" value="1"/>
</dbReference>
<dbReference type="Gene3D" id="3.30.1360.10">
    <property type="entry name" value="RNA polymerase, RBP11-like subunit"/>
    <property type="match status" value="1"/>
</dbReference>
<dbReference type="HAMAP" id="MF_00059">
    <property type="entry name" value="RNApol_bact_RpoA"/>
    <property type="match status" value="1"/>
</dbReference>
<dbReference type="InterPro" id="IPR011262">
    <property type="entry name" value="DNA-dir_RNA_pol_insert"/>
</dbReference>
<dbReference type="InterPro" id="IPR011263">
    <property type="entry name" value="DNA-dir_RNA_pol_RpoA/D/Rpb3"/>
</dbReference>
<dbReference type="InterPro" id="IPR011773">
    <property type="entry name" value="DNA-dir_RpoA"/>
</dbReference>
<dbReference type="InterPro" id="IPR036603">
    <property type="entry name" value="RBP11-like"/>
</dbReference>
<dbReference type="InterPro" id="IPR011260">
    <property type="entry name" value="RNAP_asu_C"/>
</dbReference>
<dbReference type="InterPro" id="IPR036643">
    <property type="entry name" value="RNApol_insert_sf"/>
</dbReference>
<dbReference type="NCBIfam" id="TIGR02027">
    <property type="entry name" value="rpoA"/>
    <property type="match status" value="1"/>
</dbReference>
<dbReference type="Pfam" id="PF01000">
    <property type="entry name" value="RNA_pol_A_bac"/>
    <property type="match status" value="1"/>
</dbReference>
<dbReference type="Pfam" id="PF03118">
    <property type="entry name" value="RNA_pol_A_CTD"/>
    <property type="match status" value="1"/>
</dbReference>
<dbReference type="Pfam" id="PF01193">
    <property type="entry name" value="RNA_pol_L"/>
    <property type="match status" value="1"/>
</dbReference>
<dbReference type="SMART" id="SM00662">
    <property type="entry name" value="RPOLD"/>
    <property type="match status" value="1"/>
</dbReference>
<dbReference type="SUPFAM" id="SSF47789">
    <property type="entry name" value="C-terminal domain of RNA polymerase alpha subunit"/>
    <property type="match status" value="1"/>
</dbReference>
<dbReference type="SUPFAM" id="SSF56553">
    <property type="entry name" value="Insert subdomain of RNA polymerase alpha subunit"/>
    <property type="match status" value="1"/>
</dbReference>
<dbReference type="SUPFAM" id="SSF55257">
    <property type="entry name" value="RBP11-like subunits of RNA polymerase"/>
    <property type="match status" value="1"/>
</dbReference>
<organism>
    <name type="scientific">Marsilea quadrifolia</name>
    <name type="common">European water clover</name>
    <dbReference type="NCBI Taxonomy" id="13816"/>
    <lineage>
        <taxon>Eukaryota</taxon>
        <taxon>Viridiplantae</taxon>
        <taxon>Streptophyta</taxon>
        <taxon>Embryophyta</taxon>
        <taxon>Tracheophyta</taxon>
        <taxon>Polypodiopsida</taxon>
        <taxon>Polypodiidae</taxon>
        <taxon>Salviniales</taxon>
        <taxon>Marsileaceae</taxon>
        <taxon>Marsilea</taxon>
    </lineage>
</organism>
<feature type="chain" id="PRO_0000175470" description="DNA-directed RNA polymerase subunit alpha">
    <location>
        <begin position="1"/>
        <end position="341"/>
    </location>
</feature>
<feature type="region of interest" description="Alpha N-terminal domain (alpha-NTD)" evidence="1">
    <location>
        <begin position="1"/>
        <end position="233"/>
    </location>
</feature>
<feature type="region of interest" description="Alpha C-terminal domain (alpha-CTD)" evidence="1">
    <location>
        <begin position="262"/>
        <end position="341"/>
    </location>
</feature>
<feature type="sequence variant">
    <original>M</original>
    <variation>I</variation>
    <location>
        <position position="49"/>
    </location>
</feature>
<feature type="sequence variant">
    <original>M</original>
    <variation>T</variation>
    <location>
        <position position="49"/>
    </location>
</feature>
<geneLocation type="chloroplast"/>
<name>RPOA_MARQU</name>
<proteinExistence type="evidence at transcript level"/>
<reference key="1">
    <citation type="submission" date="2000-10" db="EMBL/GenBank/DDBJ databases">
        <title>Abscisic acid regulates chloroplast genes and activities during the induction of heterophyllous switch.</title>
        <authorList>
            <person name="Wang J."/>
            <person name="Kao W."/>
            <person name="Lin B."/>
        </authorList>
    </citation>
    <scope>NUCLEOTIDE SEQUENCE [MRNA]</scope>
    <source>
        <strain>ABRH19</strain>
    </source>
</reference>
<sequence>MLKDGTSVSNEVIQWKCVEFRIESKRLHYGRFVISPFKKGQANTVGIAMRRALLGEVGGASITSARFEGVAHEYSTVAGIQETIHDILVNLKEIVLRSDSDGNQKAILSVTGPKRVTAGDISLPPSVKVIDDSQYIVTITQPISVNIELNIECDCGYRIESLNEYRDGEFPVDAVFMPVRNVNYSVHPFGSGKEMREILFIEVWTNGSLTPTEAISKASKSSIDLLSPFLHTKHEDIPDFESNRDSSSLMKFSSRVDDVDKSEGDFFKNTFIDQLELPARAFNCLKRAEIHTISDLLSYSRDDLLKLKSFGKKSVDQVSRALWERFATELPNEKPRVVGDE</sequence>
<keyword id="KW-0150">Chloroplast</keyword>
<keyword id="KW-0240">DNA-directed RNA polymerase</keyword>
<keyword id="KW-0548">Nucleotidyltransferase</keyword>
<keyword id="KW-0934">Plastid</keyword>
<keyword id="KW-0804">Transcription</keyword>
<keyword id="KW-0808">Transferase</keyword>
<evidence type="ECO:0000255" key="1">
    <source>
        <dbReference type="HAMAP-Rule" id="MF_00059"/>
    </source>
</evidence>
<evidence type="ECO:0000305" key="2"/>